<feature type="chain" id="PRO_1000195467" description="6,7-dimethyl-8-ribityllumazine synthase">
    <location>
        <begin position="1"/>
        <end position="160"/>
    </location>
</feature>
<feature type="active site" description="Proton donor" evidence="1">
    <location>
        <position position="89"/>
    </location>
</feature>
<feature type="binding site" evidence="1">
    <location>
        <position position="22"/>
    </location>
    <ligand>
        <name>5-amino-6-(D-ribitylamino)uracil</name>
        <dbReference type="ChEBI" id="CHEBI:15934"/>
    </ligand>
</feature>
<feature type="binding site" evidence="1">
    <location>
        <begin position="57"/>
        <end position="59"/>
    </location>
    <ligand>
        <name>5-amino-6-(D-ribitylamino)uracil</name>
        <dbReference type="ChEBI" id="CHEBI:15934"/>
    </ligand>
</feature>
<feature type="binding site" evidence="1">
    <location>
        <begin position="81"/>
        <end position="83"/>
    </location>
    <ligand>
        <name>5-amino-6-(D-ribitylamino)uracil</name>
        <dbReference type="ChEBI" id="CHEBI:15934"/>
    </ligand>
</feature>
<feature type="binding site" evidence="1">
    <location>
        <begin position="86"/>
        <end position="87"/>
    </location>
    <ligand>
        <name>(2S)-2-hydroxy-3-oxobutyl phosphate</name>
        <dbReference type="ChEBI" id="CHEBI:58830"/>
    </ligand>
</feature>
<feature type="binding site" evidence="1">
    <location>
        <position position="114"/>
    </location>
    <ligand>
        <name>5-amino-6-(D-ribitylamino)uracil</name>
        <dbReference type="ChEBI" id="CHEBI:15934"/>
    </ligand>
</feature>
<feature type="binding site" evidence="1">
    <location>
        <position position="128"/>
    </location>
    <ligand>
        <name>(2S)-2-hydroxy-3-oxobutyl phosphate</name>
        <dbReference type="ChEBI" id="CHEBI:58830"/>
    </ligand>
</feature>
<comment type="function">
    <text evidence="1">Catalyzes the formation of 6,7-dimethyl-8-ribityllumazine by condensation of 5-amino-6-(D-ribitylamino)uracil with 3,4-dihydroxy-2-butanone 4-phosphate. This is the penultimate step in the biosynthesis of riboflavin.</text>
</comment>
<comment type="catalytic activity">
    <reaction evidence="1">
        <text>(2S)-2-hydroxy-3-oxobutyl phosphate + 5-amino-6-(D-ribitylamino)uracil = 6,7-dimethyl-8-(1-D-ribityl)lumazine + phosphate + 2 H2O + H(+)</text>
        <dbReference type="Rhea" id="RHEA:26152"/>
        <dbReference type="ChEBI" id="CHEBI:15377"/>
        <dbReference type="ChEBI" id="CHEBI:15378"/>
        <dbReference type="ChEBI" id="CHEBI:15934"/>
        <dbReference type="ChEBI" id="CHEBI:43474"/>
        <dbReference type="ChEBI" id="CHEBI:58201"/>
        <dbReference type="ChEBI" id="CHEBI:58830"/>
        <dbReference type="EC" id="2.5.1.78"/>
    </reaction>
</comment>
<comment type="pathway">
    <text evidence="1">Cofactor biosynthesis; riboflavin biosynthesis; riboflavin from 2-hydroxy-3-oxobutyl phosphate and 5-amino-6-(D-ribitylamino)uracil: step 1/2.</text>
</comment>
<comment type="subunit">
    <text evidence="1">Forms an icosahedral capsid composed of 60 subunits, arranged as a dodecamer of pentamers.</text>
</comment>
<comment type="similarity">
    <text evidence="1">Belongs to the DMRL synthase family.</text>
</comment>
<accession>B8D7Y8</accession>
<organism>
    <name type="scientific">Buchnera aphidicola subsp. Acyrthosiphon pisum (strain Tuc7)</name>
    <dbReference type="NCBI Taxonomy" id="561501"/>
    <lineage>
        <taxon>Bacteria</taxon>
        <taxon>Pseudomonadati</taxon>
        <taxon>Pseudomonadota</taxon>
        <taxon>Gammaproteobacteria</taxon>
        <taxon>Enterobacterales</taxon>
        <taxon>Erwiniaceae</taxon>
        <taxon>Buchnera</taxon>
    </lineage>
</organism>
<gene>
    <name evidence="1" type="primary">ribH</name>
    <name type="ordered locus">BUAPTUC7_453</name>
</gene>
<name>RISB_BUCAT</name>
<dbReference type="EC" id="2.5.1.78" evidence="1"/>
<dbReference type="EMBL" id="CP001158">
    <property type="protein sequence ID" value="ACL30253.1"/>
    <property type="molecule type" value="Genomic_DNA"/>
</dbReference>
<dbReference type="SMR" id="B8D7Y8"/>
<dbReference type="KEGG" id="bau:BUAPTUC7_453"/>
<dbReference type="HOGENOM" id="CLU_089358_1_1_6"/>
<dbReference type="UniPathway" id="UPA00275">
    <property type="reaction ID" value="UER00404"/>
</dbReference>
<dbReference type="GO" id="GO:0005829">
    <property type="term" value="C:cytosol"/>
    <property type="evidence" value="ECO:0007669"/>
    <property type="project" value="TreeGrafter"/>
</dbReference>
<dbReference type="GO" id="GO:0009349">
    <property type="term" value="C:riboflavin synthase complex"/>
    <property type="evidence" value="ECO:0007669"/>
    <property type="project" value="InterPro"/>
</dbReference>
<dbReference type="GO" id="GO:0000906">
    <property type="term" value="F:6,7-dimethyl-8-ribityllumazine synthase activity"/>
    <property type="evidence" value="ECO:0007669"/>
    <property type="project" value="UniProtKB-UniRule"/>
</dbReference>
<dbReference type="GO" id="GO:0009231">
    <property type="term" value="P:riboflavin biosynthetic process"/>
    <property type="evidence" value="ECO:0007669"/>
    <property type="project" value="UniProtKB-UniRule"/>
</dbReference>
<dbReference type="CDD" id="cd09209">
    <property type="entry name" value="Lumazine_synthase-I"/>
    <property type="match status" value="1"/>
</dbReference>
<dbReference type="Gene3D" id="3.40.50.960">
    <property type="entry name" value="Lumazine/riboflavin synthase"/>
    <property type="match status" value="1"/>
</dbReference>
<dbReference type="HAMAP" id="MF_00178">
    <property type="entry name" value="Lumazine_synth"/>
    <property type="match status" value="1"/>
</dbReference>
<dbReference type="InterPro" id="IPR034964">
    <property type="entry name" value="LS"/>
</dbReference>
<dbReference type="InterPro" id="IPR002180">
    <property type="entry name" value="LS/RS"/>
</dbReference>
<dbReference type="InterPro" id="IPR036467">
    <property type="entry name" value="LS/RS_sf"/>
</dbReference>
<dbReference type="NCBIfam" id="TIGR00114">
    <property type="entry name" value="lumazine-synth"/>
    <property type="match status" value="1"/>
</dbReference>
<dbReference type="NCBIfam" id="NF000812">
    <property type="entry name" value="PRK00061.1-4"/>
    <property type="match status" value="1"/>
</dbReference>
<dbReference type="PANTHER" id="PTHR21058:SF0">
    <property type="entry name" value="6,7-DIMETHYL-8-RIBITYLLUMAZINE SYNTHASE"/>
    <property type="match status" value="1"/>
</dbReference>
<dbReference type="PANTHER" id="PTHR21058">
    <property type="entry name" value="6,7-DIMETHYL-8-RIBITYLLUMAZINE SYNTHASE DMRL SYNTHASE LUMAZINE SYNTHASE"/>
    <property type="match status" value="1"/>
</dbReference>
<dbReference type="Pfam" id="PF00885">
    <property type="entry name" value="DMRL_synthase"/>
    <property type="match status" value="1"/>
</dbReference>
<dbReference type="SUPFAM" id="SSF52121">
    <property type="entry name" value="Lumazine synthase"/>
    <property type="match status" value="1"/>
</dbReference>
<protein>
    <recommendedName>
        <fullName evidence="1">6,7-dimethyl-8-ribityllumazine synthase</fullName>
        <shortName evidence="1">DMRL synthase</shortName>
        <shortName evidence="1">LS</shortName>
        <shortName evidence="1">Lumazine synthase</shortName>
        <ecNumber evidence="1">2.5.1.78</ecNumber>
    </recommendedName>
</protein>
<sequence>MNIIQSGITAENSSIAIIIARFNEFINKNLLLGALDTLKRIGQVHEENILKIYVPGTYEIPTIASYIAKSGKYDAIIAIGTIIKGQTDHFKYIANDTSSSLSRISTQYFLPITLGILTTKNIEQSIERSGTKMGNKGSDAALAALEMINVMKKLKKVIYY</sequence>
<evidence type="ECO:0000255" key="1">
    <source>
        <dbReference type="HAMAP-Rule" id="MF_00178"/>
    </source>
</evidence>
<reference key="1">
    <citation type="journal article" date="2009" name="Science">
        <title>The dynamics and time scale of ongoing genomic erosion in symbiotic bacteria.</title>
        <authorList>
            <person name="Moran N.A."/>
            <person name="McLaughlin H.J."/>
            <person name="Sorek R."/>
        </authorList>
    </citation>
    <scope>NUCLEOTIDE SEQUENCE [LARGE SCALE GENOMIC DNA]</scope>
    <source>
        <strain>Tuc7</strain>
    </source>
</reference>
<keyword id="KW-0686">Riboflavin biosynthesis</keyword>
<keyword id="KW-0808">Transferase</keyword>
<proteinExistence type="inferred from homology"/>